<comment type="function">
    <text>May be involved in transcriptional regulation.</text>
</comment>
<comment type="subcellular location">
    <subcellularLocation>
        <location evidence="3">Nucleus</location>
    </subcellularLocation>
</comment>
<comment type="similarity">
    <text evidence="3">Belongs to the krueppel C2H2-type zinc-finger protein family.</text>
</comment>
<sequence>MAGPARFPLTFEDVAIYFSEQEWQHLEAWQKELYKQVMRTNYETLISLDNGLPKPELISWIELGRELFGSWGEKKKPDKETHCSIDDVHVHLAIEEQLLESSQRAVKSEVTCHSQLNPLESRHSFGLAVGERVDASLRHDQGISLVNAQTRCGEAVVSVVHSSSEAAQRKVLSSHRTLALPGLQRVSSWQSTQNSCPVCRENSWEKNHLVKQQKGHSKSRSYRVWKKFSRQADAKQPWSISCLGCGKSFRLKQYLVRHLDIHTRKRPPQCPKCKMCFHHERTLFSHHLKNSSSQHPTCDTSFRTDSSVDLCQQIQERPAFWREDTNVPSRQKPGPSLDCEDCCHMGSKLKGLQCGCILGEDRPHSHTEYGNCFLSQSKQAGLCRTHTGEKASQCPESNKRLCLRGLQNVHQHGLRGEKPVFCRKCGQGFTKHCGLTEHTRILSGEKSFWCAQCGRNFSQKGQLLRHQRLHLEEKPFQCTMCELRFHLKSRLRAHQLQHGGERPFSCSECGRAFTHQCKLREHLRVHSGERPFQCPECHKSFRLKGVLKAHQRIHSKERPFSCGECGKGFIRQSKLTEHFRVHSGERPFQCPECDRRFRLKGQLLSHQRLHTGERPFQCPECGKSYRVKADMKAHQLLHGGQMPFSCQCGKGFAKQSKLVEHMRTHTGEKPFQCPKCDKSFRLKAQLLSHQGLHTGERPFHCPECDKNFREKGHMLRHQRIHRPERPFACGDCGKGFIYKSKLAEHIRVHTKACQVPREPDIKKRLSQLFAMIEADWS</sequence>
<dbReference type="EMBL" id="AK080438">
    <property type="protein sequence ID" value="BAC37916.1"/>
    <property type="molecule type" value="mRNA"/>
</dbReference>
<dbReference type="CCDS" id="CCDS20098.1"/>
<dbReference type="RefSeq" id="NP_808550.1">
    <property type="nucleotide sequence ID" value="NM_177882.4"/>
</dbReference>
<dbReference type="SMR" id="Q8BV42"/>
<dbReference type="FunCoup" id="Q8BV42">
    <property type="interactions" value="853"/>
</dbReference>
<dbReference type="STRING" id="10090.ENSMUSP00000057495"/>
<dbReference type="iPTMnet" id="Q8BV42"/>
<dbReference type="PhosphoSitePlus" id="Q8BV42"/>
<dbReference type="PaxDb" id="10090-ENSMUSP00000057495"/>
<dbReference type="Antibodypedia" id="32776">
    <property type="antibodies" value="124 antibodies from 23 providers"/>
</dbReference>
<dbReference type="DNASU" id="330301"/>
<dbReference type="Ensembl" id="ENSMUST00000058844.6">
    <property type="protein sequence ID" value="ENSMUSP00000057495.6"/>
    <property type="gene ID" value="ENSMUSG00000051499.8"/>
</dbReference>
<dbReference type="GeneID" id="330301"/>
<dbReference type="KEGG" id="mmu:330301"/>
<dbReference type="UCSC" id="uc009btg.1">
    <property type="organism name" value="mouse"/>
</dbReference>
<dbReference type="AGR" id="MGI:3026883"/>
<dbReference type="CTD" id="330301"/>
<dbReference type="MGI" id="MGI:3026883">
    <property type="gene designation" value="Zfp786"/>
</dbReference>
<dbReference type="VEuPathDB" id="HostDB:ENSMUSG00000051499"/>
<dbReference type="eggNOG" id="KOG1721">
    <property type="taxonomic scope" value="Eukaryota"/>
</dbReference>
<dbReference type="GeneTree" id="ENSGT00940000162604"/>
<dbReference type="HOGENOM" id="CLU_002678_41_1_1"/>
<dbReference type="InParanoid" id="Q8BV42"/>
<dbReference type="OMA" id="TKSCRAP"/>
<dbReference type="OrthoDB" id="4748970at2759"/>
<dbReference type="PhylomeDB" id="Q8BV42"/>
<dbReference type="TreeFam" id="TF326846"/>
<dbReference type="Reactome" id="R-MMU-212436">
    <property type="pathway name" value="Generic Transcription Pathway"/>
</dbReference>
<dbReference type="BioGRID-ORCS" id="330301">
    <property type="hits" value="1 hit in 76 CRISPR screens"/>
</dbReference>
<dbReference type="PRO" id="PR:Q8BV42"/>
<dbReference type="Proteomes" id="UP000000589">
    <property type="component" value="Chromosome 6"/>
</dbReference>
<dbReference type="RNAct" id="Q8BV42">
    <property type="molecule type" value="protein"/>
</dbReference>
<dbReference type="Bgee" id="ENSMUSG00000051499">
    <property type="expression patterns" value="Expressed in spermatid and 54 other cell types or tissues"/>
</dbReference>
<dbReference type="ExpressionAtlas" id="Q8BV42">
    <property type="expression patterns" value="baseline and differential"/>
</dbReference>
<dbReference type="GO" id="GO:0005634">
    <property type="term" value="C:nucleus"/>
    <property type="evidence" value="ECO:0007669"/>
    <property type="project" value="UniProtKB-SubCell"/>
</dbReference>
<dbReference type="GO" id="GO:0003677">
    <property type="term" value="F:DNA binding"/>
    <property type="evidence" value="ECO:0007669"/>
    <property type="project" value="UniProtKB-KW"/>
</dbReference>
<dbReference type="GO" id="GO:0008270">
    <property type="term" value="F:zinc ion binding"/>
    <property type="evidence" value="ECO:0007669"/>
    <property type="project" value="UniProtKB-KW"/>
</dbReference>
<dbReference type="GO" id="GO:0006355">
    <property type="term" value="P:regulation of DNA-templated transcription"/>
    <property type="evidence" value="ECO:0007669"/>
    <property type="project" value="InterPro"/>
</dbReference>
<dbReference type="CDD" id="cd07765">
    <property type="entry name" value="KRAB_A-box"/>
    <property type="match status" value="1"/>
</dbReference>
<dbReference type="FunFam" id="3.30.160.60:FF:000151">
    <property type="entry name" value="Zinc finger and SCAN domain-containing 21"/>
    <property type="match status" value="3"/>
</dbReference>
<dbReference type="FunFam" id="3.30.160.60:FF:000189">
    <property type="entry name" value="zinc finger protein 133 isoform X1"/>
    <property type="match status" value="1"/>
</dbReference>
<dbReference type="FunFam" id="3.30.160.60:FF:001385">
    <property type="entry name" value="zinc finger protein 774"/>
    <property type="match status" value="1"/>
</dbReference>
<dbReference type="FunFam" id="3.30.160.60:FF:000562">
    <property type="entry name" value="Zinc finger protein 786"/>
    <property type="match status" value="3"/>
</dbReference>
<dbReference type="FunFam" id="3.30.160.60:FF:001892">
    <property type="entry name" value="Zinc finger protein 786"/>
    <property type="match status" value="1"/>
</dbReference>
<dbReference type="FunFam" id="3.30.160.60:FF:002002">
    <property type="entry name" value="Zinc finger protein 786"/>
    <property type="match status" value="1"/>
</dbReference>
<dbReference type="FunFam" id="3.30.160.60:FF:003276">
    <property type="entry name" value="Zinc finger protein 786"/>
    <property type="match status" value="1"/>
</dbReference>
<dbReference type="Gene3D" id="6.10.140.140">
    <property type="match status" value="1"/>
</dbReference>
<dbReference type="Gene3D" id="3.30.160.60">
    <property type="entry name" value="Classic Zinc Finger"/>
    <property type="match status" value="13"/>
</dbReference>
<dbReference type="InterPro" id="IPR050636">
    <property type="entry name" value="C2H2-ZF_domain-containing"/>
</dbReference>
<dbReference type="InterPro" id="IPR001909">
    <property type="entry name" value="KRAB"/>
</dbReference>
<dbReference type="InterPro" id="IPR036051">
    <property type="entry name" value="KRAB_dom_sf"/>
</dbReference>
<dbReference type="InterPro" id="IPR036236">
    <property type="entry name" value="Znf_C2H2_sf"/>
</dbReference>
<dbReference type="InterPro" id="IPR013087">
    <property type="entry name" value="Znf_C2H2_type"/>
</dbReference>
<dbReference type="PANTHER" id="PTHR47772:SF13">
    <property type="entry name" value="GASTRULA ZINC FINGER PROTEIN XLCGF49.1-LIKE-RELATED"/>
    <property type="match status" value="1"/>
</dbReference>
<dbReference type="PANTHER" id="PTHR47772">
    <property type="entry name" value="ZINC FINGER PROTEIN 200"/>
    <property type="match status" value="1"/>
</dbReference>
<dbReference type="Pfam" id="PF01352">
    <property type="entry name" value="KRAB"/>
    <property type="match status" value="1"/>
</dbReference>
<dbReference type="Pfam" id="PF00096">
    <property type="entry name" value="zf-C2H2"/>
    <property type="match status" value="11"/>
</dbReference>
<dbReference type="SMART" id="SM00349">
    <property type="entry name" value="KRAB"/>
    <property type="match status" value="1"/>
</dbReference>
<dbReference type="SMART" id="SM00355">
    <property type="entry name" value="ZnF_C2H2"/>
    <property type="match status" value="14"/>
</dbReference>
<dbReference type="SUPFAM" id="SSF57667">
    <property type="entry name" value="beta-beta-alpha zinc fingers"/>
    <property type="match status" value="8"/>
</dbReference>
<dbReference type="SUPFAM" id="SSF109640">
    <property type="entry name" value="KRAB domain (Kruppel-associated box)"/>
    <property type="match status" value="1"/>
</dbReference>
<dbReference type="PROSITE" id="PS50805">
    <property type="entry name" value="KRAB"/>
    <property type="match status" value="1"/>
</dbReference>
<dbReference type="PROSITE" id="PS00028">
    <property type="entry name" value="ZINC_FINGER_C2H2_1"/>
    <property type="match status" value="11"/>
</dbReference>
<dbReference type="PROSITE" id="PS50157">
    <property type="entry name" value="ZINC_FINGER_C2H2_2"/>
    <property type="match status" value="13"/>
</dbReference>
<keyword id="KW-0238">DNA-binding</keyword>
<keyword id="KW-0479">Metal-binding</keyword>
<keyword id="KW-0539">Nucleus</keyword>
<keyword id="KW-1185">Reference proteome</keyword>
<keyword id="KW-0677">Repeat</keyword>
<keyword id="KW-0804">Transcription</keyword>
<keyword id="KW-0805">Transcription regulation</keyword>
<keyword id="KW-0862">Zinc</keyword>
<keyword id="KW-0863">Zinc-finger</keyword>
<organism>
    <name type="scientific">Mus musculus</name>
    <name type="common">Mouse</name>
    <dbReference type="NCBI Taxonomy" id="10090"/>
    <lineage>
        <taxon>Eukaryota</taxon>
        <taxon>Metazoa</taxon>
        <taxon>Chordata</taxon>
        <taxon>Craniata</taxon>
        <taxon>Vertebrata</taxon>
        <taxon>Euteleostomi</taxon>
        <taxon>Mammalia</taxon>
        <taxon>Eutheria</taxon>
        <taxon>Euarchontoglires</taxon>
        <taxon>Glires</taxon>
        <taxon>Rodentia</taxon>
        <taxon>Myomorpha</taxon>
        <taxon>Muroidea</taxon>
        <taxon>Muridae</taxon>
        <taxon>Murinae</taxon>
        <taxon>Mus</taxon>
        <taxon>Mus</taxon>
    </lineage>
</organism>
<accession>Q8BV42</accession>
<evidence type="ECO:0000255" key="1">
    <source>
        <dbReference type="PROSITE-ProRule" id="PRU00042"/>
    </source>
</evidence>
<evidence type="ECO:0000255" key="2">
    <source>
        <dbReference type="PROSITE-ProRule" id="PRU00119"/>
    </source>
</evidence>
<evidence type="ECO:0000305" key="3"/>
<reference key="1">
    <citation type="journal article" date="2005" name="Science">
        <title>The transcriptional landscape of the mammalian genome.</title>
        <authorList>
            <person name="Carninci P."/>
            <person name="Kasukawa T."/>
            <person name="Katayama S."/>
            <person name="Gough J."/>
            <person name="Frith M.C."/>
            <person name="Maeda N."/>
            <person name="Oyama R."/>
            <person name="Ravasi T."/>
            <person name="Lenhard B."/>
            <person name="Wells C."/>
            <person name="Kodzius R."/>
            <person name="Shimokawa K."/>
            <person name="Bajic V.B."/>
            <person name="Brenner S.E."/>
            <person name="Batalov S."/>
            <person name="Forrest A.R."/>
            <person name="Zavolan M."/>
            <person name="Davis M.J."/>
            <person name="Wilming L.G."/>
            <person name="Aidinis V."/>
            <person name="Allen J.E."/>
            <person name="Ambesi-Impiombato A."/>
            <person name="Apweiler R."/>
            <person name="Aturaliya R.N."/>
            <person name="Bailey T.L."/>
            <person name="Bansal M."/>
            <person name="Baxter L."/>
            <person name="Beisel K.W."/>
            <person name="Bersano T."/>
            <person name="Bono H."/>
            <person name="Chalk A.M."/>
            <person name="Chiu K.P."/>
            <person name="Choudhary V."/>
            <person name="Christoffels A."/>
            <person name="Clutterbuck D.R."/>
            <person name="Crowe M.L."/>
            <person name="Dalla E."/>
            <person name="Dalrymple B.P."/>
            <person name="de Bono B."/>
            <person name="Della Gatta G."/>
            <person name="di Bernardo D."/>
            <person name="Down T."/>
            <person name="Engstrom P."/>
            <person name="Fagiolini M."/>
            <person name="Faulkner G."/>
            <person name="Fletcher C.F."/>
            <person name="Fukushima T."/>
            <person name="Furuno M."/>
            <person name="Futaki S."/>
            <person name="Gariboldi M."/>
            <person name="Georgii-Hemming P."/>
            <person name="Gingeras T.R."/>
            <person name="Gojobori T."/>
            <person name="Green R.E."/>
            <person name="Gustincich S."/>
            <person name="Harbers M."/>
            <person name="Hayashi Y."/>
            <person name="Hensch T.K."/>
            <person name="Hirokawa N."/>
            <person name="Hill D."/>
            <person name="Huminiecki L."/>
            <person name="Iacono M."/>
            <person name="Ikeo K."/>
            <person name="Iwama A."/>
            <person name="Ishikawa T."/>
            <person name="Jakt M."/>
            <person name="Kanapin A."/>
            <person name="Katoh M."/>
            <person name="Kawasawa Y."/>
            <person name="Kelso J."/>
            <person name="Kitamura H."/>
            <person name="Kitano H."/>
            <person name="Kollias G."/>
            <person name="Krishnan S.P."/>
            <person name="Kruger A."/>
            <person name="Kummerfeld S.K."/>
            <person name="Kurochkin I.V."/>
            <person name="Lareau L.F."/>
            <person name="Lazarevic D."/>
            <person name="Lipovich L."/>
            <person name="Liu J."/>
            <person name="Liuni S."/>
            <person name="McWilliam S."/>
            <person name="Madan Babu M."/>
            <person name="Madera M."/>
            <person name="Marchionni L."/>
            <person name="Matsuda H."/>
            <person name="Matsuzawa S."/>
            <person name="Miki H."/>
            <person name="Mignone F."/>
            <person name="Miyake S."/>
            <person name="Morris K."/>
            <person name="Mottagui-Tabar S."/>
            <person name="Mulder N."/>
            <person name="Nakano N."/>
            <person name="Nakauchi H."/>
            <person name="Ng P."/>
            <person name="Nilsson R."/>
            <person name="Nishiguchi S."/>
            <person name="Nishikawa S."/>
            <person name="Nori F."/>
            <person name="Ohara O."/>
            <person name="Okazaki Y."/>
            <person name="Orlando V."/>
            <person name="Pang K.C."/>
            <person name="Pavan W.J."/>
            <person name="Pavesi G."/>
            <person name="Pesole G."/>
            <person name="Petrovsky N."/>
            <person name="Piazza S."/>
            <person name="Reed J."/>
            <person name="Reid J.F."/>
            <person name="Ring B.Z."/>
            <person name="Ringwald M."/>
            <person name="Rost B."/>
            <person name="Ruan Y."/>
            <person name="Salzberg S.L."/>
            <person name="Sandelin A."/>
            <person name="Schneider C."/>
            <person name="Schoenbach C."/>
            <person name="Sekiguchi K."/>
            <person name="Semple C.A."/>
            <person name="Seno S."/>
            <person name="Sessa L."/>
            <person name="Sheng Y."/>
            <person name="Shibata Y."/>
            <person name="Shimada H."/>
            <person name="Shimada K."/>
            <person name="Silva D."/>
            <person name="Sinclair B."/>
            <person name="Sperling S."/>
            <person name="Stupka E."/>
            <person name="Sugiura K."/>
            <person name="Sultana R."/>
            <person name="Takenaka Y."/>
            <person name="Taki K."/>
            <person name="Tammoja K."/>
            <person name="Tan S.L."/>
            <person name="Tang S."/>
            <person name="Taylor M.S."/>
            <person name="Tegner J."/>
            <person name="Teichmann S.A."/>
            <person name="Ueda H.R."/>
            <person name="van Nimwegen E."/>
            <person name="Verardo R."/>
            <person name="Wei C.L."/>
            <person name="Yagi K."/>
            <person name="Yamanishi H."/>
            <person name="Zabarovsky E."/>
            <person name="Zhu S."/>
            <person name="Zimmer A."/>
            <person name="Hide W."/>
            <person name="Bult C."/>
            <person name="Grimmond S.M."/>
            <person name="Teasdale R.D."/>
            <person name="Liu E.T."/>
            <person name="Brusic V."/>
            <person name="Quackenbush J."/>
            <person name="Wahlestedt C."/>
            <person name="Mattick J.S."/>
            <person name="Hume D.A."/>
            <person name="Kai C."/>
            <person name="Sasaki D."/>
            <person name="Tomaru Y."/>
            <person name="Fukuda S."/>
            <person name="Kanamori-Katayama M."/>
            <person name="Suzuki M."/>
            <person name="Aoki J."/>
            <person name="Arakawa T."/>
            <person name="Iida J."/>
            <person name="Imamura K."/>
            <person name="Itoh M."/>
            <person name="Kato T."/>
            <person name="Kawaji H."/>
            <person name="Kawagashira N."/>
            <person name="Kawashima T."/>
            <person name="Kojima M."/>
            <person name="Kondo S."/>
            <person name="Konno H."/>
            <person name="Nakano K."/>
            <person name="Ninomiya N."/>
            <person name="Nishio T."/>
            <person name="Okada M."/>
            <person name="Plessy C."/>
            <person name="Shibata K."/>
            <person name="Shiraki T."/>
            <person name="Suzuki S."/>
            <person name="Tagami M."/>
            <person name="Waki K."/>
            <person name="Watahiki A."/>
            <person name="Okamura-Oho Y."/>
            <person name="Suzuki H."/>
            <person name="Kawai J."/>
            <person name="Hayashizaki Y."/>
        </authorList>
    </citation>
    <scope>NUCLEOTIDE SEQUENCE [LARGE SCALE MRNA]</scope>
    <source>
        <strain>C57BL/6J</strain>
        <tissue>Cerebellum</tissue>
    </source>
</reference>
<name>ZN786_MOUSE</name>
<gene>
    <name type="primary">Znf786</name>
    <name type="synonym">Zfp786</name>
</gene>
<feature type="chain" id="PRO_0000293695" description="Zinc finger protein 786">
    <location>
        <begin position="1"/>
        <end position="777"/>
    </location>
</feature>
<feature type="domain" description="KRAB" evidence="2">
    <location>
        <begin position="9"/>
        <end position="80"/>
    </location>
</feature>
<feature type="zinc finger region" description="C2H2-type 1; degenerate" evidence="1">
    <location>
        <begin position="194"/>
        <end position="216"/>
    </location>
</feature>
<feature type="zinc finger region" description="C2H2-type 2" evidence="1">
    <location>
        <begin position="240"/>
        <end position="262"/>
    </location>
</feature>
<feature type="zinc finger region" description="C2H2-type 3; degenerate" evidence="1">
    <location>
        <begin position="268"/>
        <end position="291"/>
    </location>
</feature>
<feature type="zinc finger region" description="C2H2-type 4; degenerate" evidence="1">
    <location>
        <begin position="420"/>
        <end position="442"/>
    </location>
</feature>
<feature type="zinc finger region" description="C2H2-type 5" evidence="1">
    <location>
        <begin position="448"/>
        <end position="470"/>
    </location>
</feature>
<feature type="zinc finger region" description="C2H2-type 6" evidence="1">
    <location>
        <begin position="476"/>
        <end position="498"/>
    </location>
</feature>
<feature type="zinc finger region" description="C2H2-type 7" evidence="1">
    <location>
        <begin position="504"/>
        <end position="526"/>
    </location>
</feature>
<feature type="zinc finger region" description="C2H2-type 8" evidence="1">
    <location>
        <begin position="532"/>
        <end position="554"/>
    </location>
</feature>
<feature type="zinc finger region" description="C2H2-type 9" evidence="1">
    <location>
        <begin position="560"/>
        <end position="582"/>
    </location>
</feature>
<feature type="zinc finger region" description="C2H2-type 10" evidence="1">
    <location>
        <begin position="588"/>
        <end position="610"/>
    </location>
</feature>
<feature type="zinc finger region" description="C2H2-type 11" evidence="1">
    <location>
        <begin position="616"/>
        <end position="638"/>
    </location>
</feature>
<feature type="zinc finger region" description="C2H2-type 12" evidence="1">
    <location>
        <begin position="644"/>
        <end position="665"/>
    </location>
</feature>
<feature type="zinc finger region" description="C2H2-type 13" evidence="1">
    <location>
        <begin position="671"/>
        <end position="693"/>
    </location>
</feature>
<feature type="zinc finger region" description="C2H2-type 14" evidence="1">
    <location>
        <begin position="699"/>
        <end position="721"/>
    </location>
</feature>
<feature type="zinc finger region" description="C2H2-type 15" evidence="1">
    <location>
        <begin position="727"/>
        <end position="749"/>
    </location>
</feature>
<protein>
    <recommendedName>
        <fullName>Zinc finger protein 786</fullName>
    </recommendedName>
</protein>
<proteinExistence type="evidence at transcript level"/>